<proteinExistence type="inferred from homology"/>
<gene>
    <name evidence="1" type="primary">aroL</name>
    <name type="ordered locus">ETA_25630</name>
</gene>
<dbReference type="EC" id="2.7.1.71" evidence="1"/>
<dbReference type="EMBL" id="CU468135">
    <property type="protein sequence ID" value="CAO97609.1"/>
    <property type="molecule type" value="Genomic_DNA"/>
</dbReference>
<dbReference type="RefSeq" id="WP_012442274.1">
    <property type="nucleotide sequence ID" value="NC_010694.1"/>
</dbReference>
<dbReference type="SMR" id="B2VIT0"/>
<dbReference type="STRING" id="465817.ETA_25630"/>
<dbReference type="KEGG" id="eta:ETA_25630"/>
<dbReference type="eggNOG" id="COG0703">
    <property type="taxonomic scope" value="Bacteria"/>
</dbReference>
<dbReference type="HOGENOM" id="CLU_057607_4_3_6"/>
<dbReference type="OrthoDB" id="9800332at2"/>
<dbReference type="UniPathway" id="UPA00053">
    <property type="reaction ID" value="UER00088"/>
</dbReference>
<dbReference type="Proteomes" id="UP000001726">
    <property type="component" value="Chromosome"/>
</dbReference>
<dbReference type="GO" id="GO:0005829">
    <property type="term" value="C:cytosol"/>
    <property type="evidence" value="ECO:0007669"/>
    <property type="project" value="TreeGrafter"/>
</dbReference>
<dbReference type="GO" id="GO:0005524">
    <property type="term" value="F:ATP binding"/>
    <property type="evidence" value="ECO:0007669"/>
    <property type="project" value="UniProtKB-UniRule"/>
</dbReference>
<dbReference type="GO" id="GO:0000287">
    <property type="term" value="F:magnesium ion binding"/>
    <property type="evidence" value="ECO:0007669"/>
    <property type="project" value="UniProtKB-UniRule"/>
</dbReference>
<dbReference type="GO" id="GO:0004765">
    <property type="term" value="F:shikimate kinase activity"/>
    <property type="evidence" value="ECO:0007669"/>
    <property type="project" value="UniProtKB-UniRule"/>
</dbReference>
<dbReference type="GO" id="GO:0008652">
    <property type="term" value="P:amino acid biosynthetic process"/>
    <property type="evidence" value="ECO:0007669"/>
    <property type="project" value="UniProtKB-KW"/>
</dbReference>
<dbReference type="GO" id="GO:0009073">
    <property type="term" value="P:aromatic amino acid family biosynthetic process"/>
    <property type="evidence" value="ECO:0007669"/>
    <property type="project" value="UniProtKB-KW"/>
</dbReference>
<dbReference type="GO" id="GO:0009423">
    <property type="term" value="P:chorismate biosynthetic process"/>
    <property type="evidence" value="ECO:0007669"/>
    <property type="project" value="UniProtKB-UniRule"/>
</dbReference>
<dbReference type="CDD" id="cd00464">
    <property type="entry name" value="SK"/>
    <property type="match status" value="1"/>
</dbReference>
<dbReference type="Gene3D" id="3.40.50.300">
    <property type="entry name" value="P-loop containing nucleotide triphosphate hydrolases"/>
    <property type="match status" value="1"/>
</dbReference>
<dbReference type="HAMAP" id="MF_00109">
    <property type="entry name" value="Shikimate_kinase"/>
    <property type="match status" value="1"/>
</dbReference>
<dbReference type="HAMAP" id="MF_01269">
    <property type="entry name" value="Shikimate_kinase_2"/>
    <property type="match status" value="1"/>
</dbReference>
<dbReference type="InterPro" id="IPR027417">
    <property type="entry name" value="P-loop_NTPase"/>
</dbReference>
<dbReference type="InterPro" id="IPR031322">
    <property type="entry name" value="Shikimate/glucono_kinase"/>
</dbReference>
<dbReference type="InterPro" id="IPR000623">
    <property type="entry name" value="Shikimate_kinase/TSH1"/>
</dbReference>
<dbReference type="InterPro" id="IPR027544">
    <property type="entry name" value="Shikimate_kinase_2"/>
</dbReference>
<dbReference type="InterPro" id="IPR023000">
    <property type="entry name" value="Shikimate_kinase_CS"/>
</dbReference>
<dbReference type="NCBIfam" id="NF002988">
    <property type="entry name" value="PRK03731.1"/>
    <property type="match status" value="1"/>
</dbReference>
<dbReference type="PANTHER" id="PTHR21087">
    <property type="entry name" value="SHIKIMATE KINASE"/>
    <property type="match status" value="1"/>
</dbReference>
<dbReference type="PANTHER" id="PTHR21087:SF21">
    <property type="entry name" value="SHIKIMATE KINASE 2"/>
    <property type="match status" value="1"/>
</dbReference>
<dbReference type="Pfam" id="PF01202">
    <property type="entry name" value="SKI"/>
    <property type="match status" value="1"/>
</dbReference>
<dbReference type="PRINTS" id="PR01100">
    <property type="entry name" value="SHIKIMTKNASE"/>
</dbReference>
<dbReference type="SUPFAM" id="SSF52540">
    <property type="entry name" value="P-loop containing nucleoside triphosphate hydrolases"/>
    <property type="match status" value="1"/>
</dbReference>
<dbReference type="PROSITE" id="PS01128">
    <property type="entry name" value="SHIKIMATE_KINASE"/>
    <property type="match status" value="1"/>
</dbReference>
<organism>
    <name type="scientific">Erwinia tasmaniensis (strain DSM 17950 / CFBP 7177 / CIP 109463 / NCPPB 4357 / Et1/99)</name>
    <dbReference type="NCBI Taxonomy" id="465817"/>
    <lineage>
        <taxon>Bacteria</taxon>
        <taxon>Pseudomonadati</taxon>
        <taxon>Pseudomonadota</taxon>
        <taxon>Gammaproteobacteria</taxon>
        <taxon>Enterobacterales</taxon>
        <taxon>Erwiniaceae</taxon>
        <taxon>Erwinia</taxon>
    </lineage>
</organism>
<keyword id="KW-0028">Amino-acid biosynthesis</keyword>
<keyword id="KW-0057">Aromatic amino acid biosynthesis</keyword>
<keyword id="KW-0067">ATP-binding</keyword>
<keyword id="KW-0963">Cytoplasm</keyword>
<keyword id="KW-0418">Kinase</keyword>
<keyword id="KW-0460">Magnesium</keyword>
<keyword id="KW-0479">Metal-binding</keyword>
<keyword id="KW-0547">Nucleotide-binding</keyword>
<keyword id="KW-1185">Reference proteome</keyword>
<keyword id="KW-0808">Transferase</keyword>
<comment type="function">
    <text evidence="1">Catalyzes the specific phosphorylation of the 3-hydroxyl group of shikimic acid using ATP as a cosubstrate.</text>
</comment>
<comment type="catalytic activity">
    <reaction evidence="1">
        <text>shikimate + ATP = 3-phosphoshikimate + ADP + H(+)</text>
        <dbReference type="Rhea" id="RHEA:13121"/>
        <dbReference type="ChEBI" id="CHEBI:15378"/>
        <dbReference type="ChEBI" id="CHEBI:30616"/>
        <dbReference type="ChEBI" id="CHEBI:36208"/>
        <dbReference type="ChEBI" id="CHEBI:145989"/>
        <dbReference type="ChEBI" id="CHEBI:456216"/>
        <dbReference type="EC" id="2.7.1.71"/>
    </reaction>
</comment>
<comment type="cofactor">
    <cofactor evidence="1">
        <name>Mg(2+)</name>
        <dbReference type="ChEBI" id="CHEBI:18420"/>
    </cofactor>
    <text evidence="1">Binds 1 Mg(2+) ion per subunit.</text>
</comment>
<comment type="pathway">
    <text evidence="1">Metabolic intermediate biosynthesis; chorismate biosynthesis; chorismate from D-erythrose 4-phosphate and phosphoenolpyruvate: step 5/7.</text>
</comment>
<comment type="subunit">
    <text evidence="1">Monomer.</text>
</comment>
<comment type="subcellular location">
    <subcellularLocation>
        <location evidence="1">Cytoplasm</location>
    </subcellularLocation>
</comment>
<comment type="domain">
    <text evidence="1">The LID domain closes over the active site upon ATP binding.</text>
</comment>
<comment type="similarity">
    <text evidence="1">Belongs to the shikimate kinase family. AroL subfamily.</text>
</comment>
<evidence type="ECO:0000255" key="1">
    <source>
        <dbReference type="HAMAP-Rule" id="MF_01269"/>
    </source>
</evidence>
<reference key="1">
    <citation type="journal article" date="2008" name="Environ. Microbiol.">
        <title>The genome of Erwinia tasmaniensis strain Et1/99, a non-pathogenic bacterium in the genus Erwinia.</title>
        <authorList>
            <person name="Kube M."/>
            <person name="Migdoll A.M."/>
            <person name="Mueller I."/>
            <person name="Kuhl H."/>
            <person name="Beck A."/>
            <person name="Reinhardt R."/>
            <person name="Geider K."/>
        </authorList>
    </citation>
    <scope>NUCLEOTIDE SEQUENCE [LARGE SCALE GENOMIC DNA]</scope>
    <source>
        <strain>DSM 17950 / CFBP 7177 / CIP 109463 / NCPPB 4357 / Et1/99</strain>
    </source>
</reference>
<name>AROL_ERWT9</name>
<accession>B2VIT0</accession>
<sequence>MSLPIYLIGARGCGKTTVGQALALALGYDFCDTDHYLQQARQQTVADIVAIEGWAGFRAREAESLKAVTAASKVIATGGGMVLAEENRLYMREHGRVIYLNANALVLAARLEAYPLADQRPTLTGRPVAEEMVEVLAARDALYQLAAHHIIDAMQTPDAVVNQIVSSLSLARAS</sequence>
<feature type="chain" id="PRO_1000140135" description="Shikimate kinase 2">
    <location>
        <begin position="1"/>
        <end position="174"/>
    </location>
</feature>
<feature type="region of interest" description="LID domain">
    <location>
        <begin position="112"/>
        <end position="126"/>
    </location>
</feature>
<feature type="binding site" evidence="1">
    <location>
        <begin position="12"/>
        <end position="17"/>
    </location>
    <ligand>
        <name>ATP</name>
        <dbReference type="ChEBI" id="CHEBI:30616"/>
    </ligand>
</feature>
<feature type="binding site" evidence="1">
    <location>
        <position position="16"/>
    </location>
    <ligand>
        <name>Mg(2+)</name>
        <dbReference type="ChEBI" id="CHEBI:18420"/>
    </ligand>
</feature>
<feature type="binding site" evidence="1">
    <location>
        <position position="32"/>
    </location>
    <ligand>
        <name>Mg(2+)</name>
        <dbReference type="ChEBI" id="CHEBI:18420"/>
    </ligand>
</feature>
<feature type="binding site" evidence="1">
    <location>
        <position position="34"/>
    </location>
    <ligand>
        <name>substrate</name>
    </ligand>
</feature>
<feature type="binding site" evidence="1">
    <location>
        <position position="58"/>
    </location>
    <ligand>
        <name>substrate</name>
    </ligand>
</feature>
<feature type="binding site" evidence="1">
    <location>
        <position position="79"/>
    </location>
    <ligand>
        <name>substrate</name>
    </ligand>
</feature>
<feature type="binding site" evidence="1">
    <location>
        <position position="120"/>
    </location>
    <ligand>
        <name>ATP</name>
        <dbReference type="ChEBI" id="CHEBI:30616"/>
    </ligand>
</feature>
<feature type="binding site" evidence="1">
    <location>
        <position position="139"/>
    </location>
    <ligand>
        <name>substrate</name>
    </ligand>
</feature>
<feature type="binding site" evidence="1">
    <location>
        <position position="155"/>
    </location>
    <ligand>
        <name>ATP</name>
        <dbReference type="ChEBI" id="CHEBI:30616"/>
    </ligand>
</feature>
<protein>
    <recommendedName>
        <fullName evidence="1">Shikimate kinase 2</fullName>
        <shortName evidence="1">SK 2</shortName>
        <ecNumber evidence="1">2.7.1.71</ecNumber>
    </recommendedName>
</protein>